<name>YCAR_ECO8A</name>
<evidence type="ECO:0000255" key="1">
    <source>
        <dbReference type="HAMAP-Rule" id="MF_01187"/>
    </source>
</evidence>
<protein>
    <recommendedName>
        <fullName evidence="1">UPF0434 protein YcaR</fullName>
    </recommendedName>
</protein>
<sequence>MDHRLLEIIACPVCNGKLWYNQEKQELICKLDNLAFPLRDGIPVLLETEARVLTADESKS</sequence>
<reference key="1">
    <citation type="journal article" date="2009" name="PLoS Genet.">
        <title>Organised genome dynamics in the Escherichia coli species results in highly diverse adaptive paths.</title>
        <authorList>
            <person name="Touchon M."/>
            <person name="Hoede C."/>
            <person name="Tenaillon O."/>
            <person name="Barbe V."/>
            <person name="Baeriswyl S."/>
            <person name="Bidet P."/>
            <person name="Bingen E."/>
            <person name="Bonacorsi S."/>
            <person name="Bouchier C."/>
            <person name="Bouvet O."/>
            <person name="Calteau A."/>
            <person name="Chiapello H."/>
            <person name="Clermont O."/>
            <person name="Cruveiller S."/>
            <person name="Danchin A."/>
            <person name="Diard M."/>
            <person name="Dossat C."/>
            <person name="Karoui M.E."/>
            <person name="Frapy E."/>
            <person name="Garry L."/>
            <person name="Ghigo J.M."/>
            <person name="Gilles A.M."/>
            <person name="Johnson J."/>
            <person name="Le Bouguenec C."/>
            <person name="Lescat M."/>
            <person name="Mangenot S."/>
            <person name="Martinez-Jehanne V."/>
            <person name="Matic I."/>
            <person name="Nassif X."/>
            <person name="Oztas S."/>
            <person name="Petit M.A."/>
            <person name="Pichon C."/>
            <person name="Rouy Z."/>
            <person name="Ruf C.S."/>
            <person name="Schneider D."/>
            <person name="Tourret J."/>
            <person name="Vacherie B."/>
            <person name="Vallenet D."/>
            <person name="Medigue C."/>
            <person name="Rocha E.P.C."/>
            <person name="Denamur E."/>
        </authorList>
    </citation>
    <scope>NUCLEOTIDE SEQUENCE [LARGE SCALE GENOMIC DNA]</scope>
    <source>
        <strain>IAI1</strain>
    </source>
</reference>
<accession>B7M846</accession>
<gene>
    <name evidence="1" type="primary">ycaR</name>
    <name type="ordered locus">ECIAI1_0958</name>
</gene>
<proteinExistence type="inferred from homology"/>
<organism>
    <name type="scientific">Escherichia coli O8 (strain IAI1)</name>
    <dbReference type="NCBI Taxonomy" id="585034"/>
    <lineage>
        <taxon>Bacteria</taxon>
        <taxon>Pseudomonadati</taxon>
        <taxon>Pseudomonadota</taxon>
        <taxon>Gammaproteobacteria</taxon>
        <taxon>Enterobacterales</taxon>
        <taxon>Enterobacteriaceae</taxon>
        <taxon>Escherichia</taxon>
    </lineage>
</organism>
<feature type="chain" id="PRO_1000138305" description="UPF0434 protein YcaR">
    <location>
        <begin position="1"/>
        <end position="60"/>
    </location>
</feature>
<comment type="similarity">
    <text evidence="1">Belongs to the UPF0434 family.</text>
</comment>
<dbReference type="EMBL" id="CU928160">
    <property type="protein sequence ID" value="CAQ97822.1"/>
    <property type="molecule type" value="Genomic_DNA"/>
</dbReference>
<dbReference type="RefSeq" id="WP_000350058.1">
    <property type="nucleotide sequence ID" value="NC_011741.1"/>
</dbReference>
<dbReference type="SMR" id="B7M846"/>
<dbReference type="GeneID" id="93776498"/>
<dbReference type="KEGG" id="ecr:ECIAI1_0958"/>
<dbReference type="HOGENOM" id="CLU_155659_3_1_6"/>
<dbReference type="GO" id="GO:0005829">
    <property type="term" value="C:cytosol"/>
    <property type="evidence" value="ECO:0007669"/>
    <property type="project" value="TreeGrafter"/>
</dbReference>
<dbReference type="FunFam" id="2.20.25.10:FF:000002">
    <property type="entry name" value="UPF0434 protein YcaR"/>
    <property type="match status" value="1"/>
</dbReference>
<dbReference type="Gene3D" id="2.20.25.10">
    <property type="match status" value="1"/>
</dbReference>
<dbReference type="HAMAP" id="MF_01187">
    <property type="entry name" value="UPF0434"/>
    <property type="match status" value="1"/>
</dbReference>
<dbReference type="InterPro" id="IPR005651">
    <property type="entry name" value="Trm112-like"/>
</dbReference>
<dbReference type="NCBIfam" id="NF008806">
    <property type="entry name" value="PRK11827.1"/>
    <property type="match status" value="1"/>
</dbReference>
<dbReference type="PANTHER" id="PTHR33505:SF4">
    <property type="entry name" value="PROTEIN PREY, MITOCHONDRIAL"/>
    <property type="match status" value="1"/>
</dbReference>
<dbReference type="PANTHER" id="PTHR33505">
    <property type="entry name" value="ZGC:162634"/>
    <property type="match status" value="1"/>
</dbReference>
<dbReference type="Pfam" id="PF03966">
    <property type="entry name" value="Trm112p"/>
    <property type="match status" value="1"/>
</dbReference>
<dbReference type="SUPFAM" id="SSF158997">
    <property type="entry name" value="Trm112p-like"/>
    <property type="match status" value="1"/>
</dbReference>